<reference key="1">
    <citation type="submission" date="2008-02" db="EMBL/GenBank/DDBJ databases">
        <title>Complete sequence of Shewanella woodyi ATCC 51908.</title>
        <authorList>
            <consortium name="US DOE Joint Genome Institute"/>
            <person name="Copeland A."/>
            <person name="Lucas S."/>
            <person name="Lapidus A."/>
            <person name="Glavina del Rio T."/>
            <person name="Dalin E."/>
            <person name="Tice H."/>
            <person name="Bruce D."/>
            <person name="Goodwin L."/>
            <person name="Pitluck S."/>
            <person name="Sims D."/>
            <person name="Brettin T."/>
            <person name="Detter J.C."/>
            <person name="Han C."/>
            <person name="Kuske C.R."/>
            <person name="Schmutz J."/>
            <person name="Larimer F."/>
            <person name="Land M."/>
            <person name="Hauser L."/>
            <person name="Kyrpides N."/>
            <person name="Lykidis A."/>
            <person name="Zhao J.-S."/>
            <person name="Richardson P."/>
        </authorList>
    </citation>
    <scope>NUCLEOTIDE SEQUENCE [LARGE SCALE GENOMIC DNA]</scope>
    <source>
        <strain>ATCC 51908 / MS32</strain>
    </source>
</reference>
<comment type="function">
    <text evidence="1">Catalyzes the attachment of isoleucine to tRNA(Ile). As IleRS can inadvertently accommodate and process structurally similar amino acids such as valine, to avoid such errors it has two additional distinct tRNA(Ile)-dependent editing activities. One activity is designated as 'pretransfer' editing and involves the hydrolysis of activated Val-AMP. The other activity is designated 'posttransfer' editing and involves deacylation of mischarged Val-tRNA(Ile).</text>
</comment>
<comment type="catalytic activity">
    <reaction evidence="1">
        <text>tRNA(Ile) + L-isoleucine + ATP = L-isoleucyl-tRNA(Ile) + AMP + diphosphate</text>
        <dbReference type="Rhea" id="RHEA:11060"/>
        <dbReference type="Rhea" id="RHEA-COMP:9666"/>
        <dbReference type="Rhea" id="RHEA-COMP:9695"/>
        <dbReference type="ChEBI" id="CHEBI:30616"/>
        <dbReference type="ChEBI" id="CHEBI:33019"/>
        <dbReference type="ChEBI" id="CHEBI:58045"/>
        <dbReference type="ChEBI" id="CHEBI:78442"/>
        <dbReference type="ChEBI" id="CHEBI:78528"/>
        <dbReference type="ChEBI" id="CHEBI:456215"/>
        <dbReference type="EC" id="6.1.1.5"/>
    </reaction>
</comment>
<comment type="cofactor">
    <cofactor evidence="1">
        <name>Zn(2+)</name>
        <dbReference type="ChEBI" id="CHEBI:29105"/>
    </cofactor>
    <text evidence="1">Binds 1 zinc ion per subunit.</text>
</comment>
<comment type="subunit">
    <text evidence="1">Monomer.</text>
</comment>
<comment type="subcellular location">
    <subcellularLocation>
        <location evidence="1">Cytoplasm</location>
    </subcellularLocation>
</comment>
<comment type="domain">
    <text evidence="1">IleRS has two distinct active sites: one for aminoacylation and one for editing. The misactivated valine is translocated from the active site to the editing site, which sterically excludes the correctly activated isoleucine. The single editing site contains two valyl binding pockets, one specific for each substrate (Val-AMP or Val-tRNA(Ile)).</text>
</comment>
<comment type="similarity">
    <text evidence="1">Belongs to the class-I aminoacyl-tRNA synthetase family. IleS type 1 subfamily.</text>
</comment>
<protein>
    <recommendedName>
        <fullName evidence="1">Isoleucine--tRNA ligase</fullName>
        <ecNumber evidence="1">6.1.1.5</ecNumber>
    </recommendedName>
    <alternativeName>
        <fullName evidence="1">Isoleucyl-tRNA synthetase</fullName>
        <shortName evidence="1">IleRS</shortName>
    </alternativeName>
</protein>
<proteinExistence type="inferred from homology"/>
<name>SYI_SHEWM</name>
<organism>
    <name type="scientific">Shewanella woodyi (strain ATCC 51908 / MS32)</name>
    <dbReference type="NCBI Taxonomy" id="392500"/>
    <lineage>
        <taxon>Bacteria</taxon>
        <taxon>Pseudomonadati</taxon>
        <taxon>Pseudomonadota</taxon>
        <taxon>Gammaproteobacteria</taxon>
        <taxon>Alteromonadales</taxon>
        <taxon>Shewanellaceae</taxon>
        <taxon>Shewanella</taxon>
    </lineage>
</organism>
<gene>
    <name evidence="1" type="primary">ileS</name>
    <name type="ordered locus">Swoo_1291</name>
</gene>
<dbReference type="EC" id="6.1.1.5" evidence="1"/>
<dbReference type="EMBL" id="CP000961">
    <property type="protein sequence ID" value="ACA85583.1"/>
    <property type="molecule type" value="Genomic_DNA"/>
</dbReference>
<dbReference type="RefSeq" id="WP_012323929.1">
    <property type="nucleotide sequence ID" value="NC_010506.1"/>
</dbReference>
<dbReference type="SMR" id="B1KIT5"/>
<dbReference type="STRING" id="392500.Swoo_1291"/>
<dbReference type="KEGG" id="swd:Swoo_1291"/>
<dbReference type="eggNOG" id="COG0060">
    <property type="taxonomic scope" value="Bacteria"/>
</dbReference>
<dbReference type="HOGENOM" id="CLU_001493_7_0_6"/>
<dbReference type="Proteomes" id="UP000002168">
    <property type="component" value="Chromosome"/>
</dbReference>
<dbReference type="GO" id="GO:0005829">
    <property type="term" value="C:cytosol"/>
    <property type="evidence" value="ECO:0007669"/>
    <property type="project" value="TreeGrafter"/>
</dbReference>
<dbReference type="GO" id="GO:0002161">
    <property type="term" value="F:aminoacyl-tRNA deacylase activity"/>
    <property type="evidence" value="ECO:0007669"/>
    <property type="project" value="InterPro"/>
</dbReference>
<dbReference type="GO" id="GO:0005524">
    <property type="term" value="F:ATP binding"/>
    <property type="evidence" value="ECO:0007669"/>
    <property type="project" value="UniProtKB-UniRule"/>
</dbReference>
<dbReference type="GO" id="GO:0004822">
    <property type="term" value="F:isoleucine-tRNA ligase activity"/>
    <property type="evidence" value="ECO:0007669"/>
    <property type="project" value="UniProtKB-UniRule"/>
</dbReference>
<dbReference type="GO" id="GO:0000049">
    <property type="term" value="F:tRNA binding"/>
    <property type="evidence" value="ECO:0007669"/>
    <property type="project" value="InterPro"/>
</dbReference>
<dbReference type="GO" id="GO:0008270">
    <property type="term" value="F:zinc ion binding"/>
    <property type="evidence" value="ECO:0007669"/>
    <property type="project" value="UniProtKB-UniRule"/>
</dbReference>
<dbReference type="GO" id="GO:0006428">
    <property type="term" value="P:isoleucyl-tRNA aminoacylation"/>
    <property type="evidence" value="ECO:0007669"/>
    <property type="project" value="UniProtKB-UniRule"/>
</dbReference>
<dbReference type="CDD" id="cd07960">
    <property type="entry name" value="Anticodon_Ia_Ile_BEm"/>
    <property type="match status" value="1"/>
</dbReference>
<dbReference type="CDD" id="cd00818">
    <property type="entry name" value="IleRS_core"/>
    <property type="match status" value="1"/>
</dbReference>
<dbReference type="FunFam" id="1.10.730.20:FF:000001">
    <property type="entry name" value="Isoleucine--tRNA ligase"/>
    <property type="match status" value="1"/>
</dbReference>
<dbReference type="FunFam" id="3.40.50.620:FF:000042">
    <property type="entry name" value="Isoleucine--tRNA ligase"/>
    <property type="match status" value="1"/>
</dbReference>
<dbReference type="FunFam" id="3.40.50.620:FF:000048">
    <property type="entry name" value="Isoleucine--tRNA ligase"/>
    <property type="match status" value="1"/>
</dbReference>
<dbReference type="Gene3D" id="1.10.730.20">
    <property type="match status" value="1"/>
</dbReference>
<dbReference type="Gene3D" id="3.40.50.620">
    <property type="entry name" value="HUPs"/>
    <property type="match status" value="2"/>
</dbReference>
<dbReference type="HAMAP" id="MF_02002">
    <property type="entry name" value="Ile_tRNA_synth_type1"/>
    <property type="match status" value="1"/>
</dbReference>
<dbReference type="InterPro" id="IPR001412">
    <property type="entry name" value="aa-tRNA-synth_I_CS"/>
</dbReference>
<dbReference type="InterPro" id="IPR002300">
    <property type="entry name" value="aa-tRNA-synth_Ia"/>
</dbReference>
<dbReference type="InterPro" id="IPR033708">
    <property type="entry name" value="Anticodon_Ile_BEm"/>
</dbReference>
<dbReference type="InterPro" id="IPR002301">
    <property type="entry name" value="Ile-tRNA-ligase"/>
</dbReference>
<dbReference type="InterPro" id="IPR023585">
    <property type="entry name" value="Ile-tRNA-ligase_type1"/>
</dbReference>
<dbReference type="InterPro" id="IPR050081">
    <property type="entry name" value="Ile-tRNA_ligase"/>
</dbReference>
<dbReference type="InterPro" id="IPR013155">
    <property type="entry name" value="M/V/L/I-tRNA-synth_anticd-bd"/>
</dbReference>
<dbReference type="InterPro" id="IPR014729">
    <property type="entry name" value="Rossmann-like_a/b/a_fold"/>
</dbReference>
<dbReference type="InterPro" id="IPR009080">
    <property type="entry name" value="tRNAsynth_Ia_anticodon-bd"/>
</dbReference>
<dbReference type="InterPro" id="IPR009008">
    <property type="entry name" value="Val/Leu/Ile-tRNA-synth_edit"/>
</dbReference>
<dbReference type="InterPro" id="IPR010663">
    <property type="entry name" value="Znf_FPG/IleRS"/>
</dbReference>
<dbReference type="NCBIfam" id="TIGR00392">
    <property type="entry name" value="ileS"/>
    <property type="match status" value="1"/>
</dbReference>
<dbReference type="PANTHER" id="PTHR42765:SF1">
    <property type="entry name" value="ISOLEUCINE--TRNA LIGASE, MITOCHONDRIAL"/>
    <property type="match status" value="1"/>
</dbReference>
<dbReference type="PANTHER" id="PTHR42765">
    <property type="entry name" value="SOLEUCYL-TRNA SYNTHETASE"/>
    <property type="match status" value="1"/>
</dbReference>
<dbReference type="Pfam" id="PF08264">
    <property type="entry name" value="Anticodon_1"/>
    <property type="match status" value="1"/>
</dbReference>
<dbReference type="Pfam" id="PF00133">
    <property type="entry name" value="tRNA-synt_1"/>
    <property type="match status" value="1"/>
</dbReference>
<dbReference type="Pfam" id="PF06827">
    <property type="entry name" value="zf-FPG_IleRS"/>
    <property type="match status" value="1"/>
</dbReference>
<dbReference type="PRINTS" id="PR00984">
    <property type="entry name" value="TRNASYNTHILE"/>
</dbReference>
<dbReference type="SUPFAM" id="SSF47323">
    <property type="entry name" value="Anticodon-binding domain of a subclass of class I aminoacyl-tRNA synthetases"/>
    <property type="match status" value="1"/>
</dbReference>
<dbReference type="SUPFAM" id="SSF52374">
    <property type="entry name" value="Nucleotidylyl transferase"/>
    <property type="match status" value="1"/>
</dbReference>
<dbReference type="SUPFAM" id="SSF50677">
    <property type="entry name" value="ValRS/IleRS/LeuRS editing domain"/>
    <property type="match status" value="1"/>
</dbReference>
<dbReference type="PROSITE" id="PS00178">
    <property type="entry name" value="AA_TRNA_LIGASE_I"/>
    <property type="match status" value="1"/>
</dbReference>
<accession>B1KIT5</accession>
<sequence length="940" mass="105573">MSDYKSTLNLPETEFPMRGNLANREPVMLKSWAEDDLYQQIRDSRIGRKPFILHDGPPYANGSIHIGHSVNKILKDIIVKSKTMSGFDAPYIPGWDCHGLPIELKVEQKVGKPGHKVTAAEFRVKCREYAAKQVDGQRDDFMRLGVFGDWHNPYLTMDYSTEANIVRSLSKVIDSGHLHKGVKPVHWCTECGSALAEAEVEYEDKKSPAIDVAFAAADKVTLLAKFGVEECSGSVSMVIWTTTPWTLPANRALSVAGDIEYALVEFVKGDKTSSVILAETLVESCMERYGVDSHNVLGKTSGQSLELLRFNHPFYDFDVPVILGEHVTVDSGTGVVHTAPGHGQDDFVVGQKYGLEVANPVGDNGVYKSDTEIFAGQHVFKANDNVVALLEEKGALIKLENILHSYPHCWRHKTPIIFRATPQWFISMEQKGLRKQALNEIEQTQWIPDWGQSRIEKMVENRPDWCISRQRTWGVPIALFVHRETEELHPDSSSLMERVANKIEQEGIQAWWDLDAAELLGEEADQYRKVTDTLDVWYDSGSSFSSVVASRPEFQGHDIDLYLEGSDQHRGWFMSSLMISTAMNGKAPYKQVLTHGFTVDGNGRKMSKSVGNVIAPQTVTNKLGADILRLWVAATDYSGEMTVSDEILKRSADAYRRIRNTARFLLANINGFNPETDLVAVEEMVALDRWAVRRAAALQEELLEAYEQYNFHVVTQKLMQFCSVELGSFYLDIIKDRQYTAKGDSHARRSCQSALYLISEAMVRWIAPILSFTADEVWQLLPGQRDKYVFTQEWFQGLKSVTLESDLSDDFWSELLTVRGEVNKVIEQARREKQVGGSLEAEITLYADDALSTALATLGDELRFVLLTSKTQILDLSAAPADAIETELSSLKLGLKKAETEKCERCWHHREDVGQVATHPTLCTRCVTNIEGDGEVRQFA</sequence>
<feature type="chain" id="PRO_1000189196" description="Isoleucine--tRNA ligase">
    <location>
        <begin position="1"/>
        <end position="940"/>
    </location>
</feature>
<feature type="short sequence motif" description="'HIGH' region">
    <location>
        <begin position="58"/>
        <end position="68"/>
    </location>
</feature>
<feature type="short sequence motif" description="'KMSKS' region">
    <location>
        <begin position="605"/>
        <end position="609"/>
    </location>
</feature>
<feature type="binding site" evidence="1">
    <location>
        <position position="564"/>
    </location>
    <ligand>
        <name>L-isoleucyl-5'-AMP</name>
        <dbReference type="ChEBI" id="CHEBI:178002"/>
    </ligand>
</feature>
<feature type="binding site" evidence="1">
    <location>
        <position position="608"/>
    </location>
    <ligand>
        <name>ATP</name>
        <dbReference type="ChEBI" id="CHEBI:30616"/>
    </ligand>
</feature>
<feature type="binding site" evidence="1">
    <location>
        <position position="903"/>
    </location>
    <ligand>
        <name>Zn(2+)</name>
        <dbReference type="ChEBI" id="CHEBI:29105"/>
    </ligand>
</feature>
<feature type="binding site" evidence="1">
    <location>
        <position position="906"/>
    </location>
    <ligand>
        <name>Zn(2+)</name>
        <dbReference type="ChEBI" id="CHEBI:29105"/>
    </ligand>
</feature>
<feature type="binding site" evidence="1">
    <location>
        <position position="923"/>
    </location>
    <ligand>
        <name>Zn(2+)</name>
        <dbReference type="ChEBI" id="CHEBI:29105"/>
    </ligand>
</feature>
<feature type="binding site" evidence="1">
    <location>
        <position position="926"/>
    </location>
    <ligand>
        <name>Zn(2+)</name>
        <dbReference type="ChEBI" id="CHEBI:29105"/>
    </ligand>
</feature>
<evidence type="ECO:0000255" key="1">
    <source>
        <dbReference type="HAMAP-Rule" id="MF_02002"/>
    </source>
</evidence>
<keyword id="KW-0030">Aminoacyl-tRNA synthetase</keyword>
<keyword id="KW-0067">ATP-binding</keyword>
<keyword id="KW-0963">Cytoplasm</keyword>
<keyword id="KW-0436">Ligase</keyword>
<keyword id="KW-0479">Metal-binding</keyword>
<keyword id="KW-0547">Nucleotide-binding</keyword>
<keyword id="KW-0648">Protein biosynthesis</keyword>
<keyword id="KW-1185">Reference proteome</keyword>
<keyword id="KW-0862">Zinc</keyword>